<dbReference type="EC" id="3.6.1.1" evidence="1"/>
<dbReference type="EMBL" id="AE000666">
    <property type="protein sequence ID" value="AAB84769.1"/>
    <property type="molecule type" value="Genomic_DNA"/>
</dbReference>
<dbReference type="PIR" id="B69133">
    <property type="entry name" value="B69133"/>
</dbReference>
<dbReference type="RefSeq" id="WP_010875902.1">
    <property type="nucleotide sequence ID" value="NC_000916.1"/>
</dbReference>
<dbReference type="SMR" id="O26363"/>
<dbReference type="STRING" id="187420.MTH_263"/>
<dbReference type="PaxDb" id="187420-MTH_263"/>
<dbReference type="EnsemblBacteria" id="AAB84769">
    <property type="protein sequence ID" value="AAB84769"/>
    <property type="gene ID" value="MTH_263"/>
</dbReference>
<dbReference type="KEGG" id="mth:MTH_263"/>
<dbReference type="PATRIC" id="fig|187420.15.peg.232"/>
<dbReference type="HOGENOM" id="CLU_073198_1_2_2"/>
<dbReference type="InParanoid" id="O26363"/>
<dbReference type="Proteomes" id="UP000005223">
    <property type="component" value="Chromosome"/>
</dbReference>
<dbReference type="GO" id="GO:0005737">
    <property type="term" value="C:cytoplasm"/>
    <property type="evidence" value="ECO:0007669"/>
    <property type="project" value="UniProtKB-SubCell"/>
</dbReference>
<dbReference type="GO" id="GO:0004427">
    <property type="term" value="F:inorganic diphosphate phosphatase activity"/>
    <property type="evidence" value="ECO:0007669"/>
    <property type="project" value="UniProtKB-UniRule"/>
</dbReference>
<dbReference type="GO" id="GO:0000287">
    <property type="term" value="F:magnesium ion binding"/>
    <property type="evidence" value="ECO:0007669"/>
    <property type="project" value="UniProtKB-UniRule"/>
</dbReference>
<dbReference type="GO" id="GO:0006796">
    <property type="term" value="P:phosphate-containing compound metabolic process"/>
    <property type="evidence" value="ECO:0007669"/>
    <property type="project" value="InterPro"/>
</dbReference>
<dbReference type="CDD" id="cd00412">
    <property type="entry name" value="pyrophosphatase"/>
    <property type="match status" value="1"/>
</dbReference>
<dbReference type="FunFam" id="3.90.80.10:FF:000003">
    <property type="entry name" value="Inorganic pyrophosphatase"/>
    <property type="match status" value="1"/>
</dbReference>
<dbReference type="Gene3D" id="3.90.80.10">
    <property type="entry name" value="Inorganic pyrophosphatase"/>
    <property type="match status" value="1"/>
</dbReference>
<dbReference type="HAMAP" id="MF_00209">
    <property type="entry name" value="Inorganic_PPase"/>
    <property type="match status" value="1"/>
</dbReference>
<dbReference type="InterPro" id="IPR008162">
    <property type="entry name" value="Pyrophosphatase"/>
</dbReference>
<dbReference type="InterPro" id="IPR036649">
    <property type="entry name" value="Pyrophosphatase_sf"/>
</dbReference>
<dbReference type="PANTHER" id="PTHR10286">
    <property type="entry name" value="INORGANIC PYROPHOSPHATASE"/>
    <property type="match status" value="1"/>
</dbReference>
<dbReference type="Pfam" id="PF00719">
    <property type="entry name" value="Pyrophosphatase"/>
    <property type="match status" value="1"/>
</dbReference>
<dbReference type="SUPFAM" id="SSF50324">
    <property type="entry name" value="Inorganic pyrophosphatase"/>
    <property type="match status" value="1"/>
</dbReference>
<dbReference type="PROSITE" id="PS00387">
    <property type="entry name" value="PPASE"/>
    <property type="match status" value="1"/>
</dbReference>
<organism>
    <name type="scientific">Methanothermobacter thermautotrophicus (strain ATCC 29096 / DSM 1053 / JCM 10044 / NBRC 100330 / Delta H)</name>
    <name type="common">Methanobacterium thermoautotrophicum</name>
    <dbReference type="NCBI Taxonomy" id="187420"/>
    <lineage>
        <taxon>Archaea</taxon>
        <taxon>Methanobacteriati</taxon>
        <taxon>Methanobacteriota</taxon>
        <taxon>Methanomada group</taxon>
        <taxon>Methanobacteria</taxon>
        <taxon>Methanobacteriales</taxon>
        <taxon>Methanobacteriaceae</taxon>
        <taxon>Methanothermobacter</taxon>
    </lineage>
</organism>
<proteinExistence type="inferred from homology"/>
<protein>
    <recommendedName>
        <fullName evidence="1">Inorganic pyrophosphatase</fullName>
        <ecNumber evidence="1">3.6.1.1</ecNumber>
    </recommendedName>
    <alternativeName>
        <fullName evidence="1">Pyrophosphate phospho-hydrolase</fullName>
        <shortName evidence="1">PPase</shortName>
    </alternativeName>
</protein>
<evidence type="ECO:0000255" key="1">
    <source>
        <dbReference type="HAMAP-Rule" id="MF_00209"/>
    </source>
</evidence>
<accession>O26363</accession>
<gene>
    <name evidence="1" type="primary">ppa</name>
    <name type="ordered locus">MTH_263</name>
</gene>
<name>IPYR_METTH</name>
<keyword id="KW-0963">Cytoplasm</keyword>
<keyword id="KW-0378">Hydrolase</keyword>
<keyword id="KW-0460">Magnesium</keyword>
<keyword id="KW-0479">Metal-binding</keyword>
<keyword id="KW-1185">Reference proteome</keyword>
<comment type="function">
    <text evidence="1">Catalyzes the hydrolysis of inorganic pyrophosphate (PPi) forming two phosphate ions.</text>
</comment>
<comment type="catalytic activity">
    <reaction evidence="1">
        <text>diphosphate + H2O = 2 phosphate + H(+)</text>
        <dbReference type="Rhea" id="RHEA:24576"/>
        <dbReference type="ChEBI" id="CHEBI:15377"/>
        <dbReference type="ChEBI" id="CHEBI:15378"/>
        <dbReference type="ChEBI" id="CHEBI:33019"/>
        <dbReference type="ChEBI" id="CHEBI:43474"/>
        <dbReference type="EC" id="3.6.1.1"/>
    </reaction>
</comment>
<comment type="cofactor">
    <cofactor evidence="1">
        <name>Mg(2+)</name>
        <dbReference type="ChEBI" id="CHEBI:18420"/>
    </cofactor>
</comment>
<comment type="subunit">
    <text evidence="1">Homohexamer.</text>
</comment>
<comment type="subcellular location">
    <subcellularLocation>
        <location evidence="1">Cytoplasm</location>
    </subcellularLocation>
</comment>
<comment type="similarity">
    <text evidence="1">Belongs to the PPase family.</text>
</comment>
<sequence>MNLWKDIEPGPSVPEVVYAVVEIPKGSRNKYEYHKDLQAFALDRVLYSAVFYPAEYGIIPRTLYDDGDPMDILVLMDEPTFPGCIIESRPIGLLRMIDGGDQDDKILAVPVADPHFADVKDISDIPEHNLKEIANFFETYKKLEGKKTETLGWEGAEKAFEAVNHSIELYRKKYME</sequence>
<feature type="chain" id="PRO_0000137552" description="Inorganic pyrophosphatase">
    <location>
        <begin position="1"/>
        <end position="176"/>
    </location>
</feature>
<feature type="binding site" evidence="1">
    <location>
        <position position="30"/>
    </location>
    <ligand>
        <name>substrate</name>
    </ligand>
</feature>
<feature type="binding site" evidence="1">
    <location>
        <position position="44"/>
    </location>
    <ligand>
        <name>substrate</name>
    </ligand>
</feature>
<feature type="binding site" evidence="1">
    <location>
        <position position="56"/>
    </location>
    <ligand>
        <name>substrate</name>
    </ligand>
</feature>
<feature type="binding site" evidence="1">
    <location>
        <position position="66"/>
    </location>
    <ligand>
        <name>Mg(2+)</name>
        <dbReference type="ChEBI" id="CHEBI:18420"/>
        <label>1</label>
    </ligand>
</feature>
<feature type="binding site" evidence="1">
    <location>
        <position position="71"/>
    </location>
    <ligand>
        <name>Mg(2+)</name>
        <dbReference type="ChEBI" id="CHEBI:18420"/>
        <label>1</label>
    </ligand>
</feature>
<feature type="binding site" evidence="1">
    <location>
        <position position="71"/>
    </location>
    <ligand>
        <name>Mg(2+)</name>
        <dbReference type="ChEBI" id="CHEBI:18420"/>
        <label>2</label>
    </ligand>
</feature>
<feature type="binding site" evidence="1">
    <location>
        <position position="103"/>
    </location>
    <ligand>
        <name>Mg(2+)</name>
        <dbReference type="ChEBI" id="CHEBI:18420"/>
        <label>1</label>
    </ligand>
</feature>
<feature type="binding site" evidence="1">
    <location>
        <position position="140"/>
    </location>
    <ligand>
        <name>substrate</name>
    </ligand>
</feature>
<reference key="1">
    <citation type="journal article" date="1997" name="J. Bacteriol.">
        <title>Complete genome sequence of Methanobacterium thermoautotrophicum deltaH: functional analysis and comparative genomics.</title>
        <authorList>
            <person name="Smith D.R."/>
            <person name="Doucette-Stamm L.A."/>
            <person name="Deloughery C."/>
            <person name="Lee H.-M."/>
            <person name="Dubois J."/>
            <person name="Aldredge T."/>
            <person name="Bashirzadeh R."/>
            <person name="Blakely D."/>
            <person name="Cook R."/>
            <person name="Gilbert K."/>
            <person name="Harrison D."/>
            <person name="Hoang L."/>
            <person name="Keagle P."/>
            <person name="Lumm W."/>
            <person name="Pothier B."/>
            <person name="Qiu D."/>
            <person name="Spadafora R."/>
            <person name="Vicare R."/>
            <person name="Wang Y."/>
            <person name="Wierzbowski J."/>
            <person name="Gibson R."/>
            <person name="Jiwani N."/>
            <person name="Caruso A."/>
            <person name="Bush D."/>
            <person name="Safer H."/>
            <person name="Patwell D."/>
            <person name="Prabhakar S."/>
            <person name="McDougall S."/>
            <person name="Shimer G."/>
            <person name="Goyal A."/>
            <person name="Pietrovski S."/>
            <person name="Church G.M."/>
            <person name="Daniels C.J."/>
            <person name="Mao J.-I."/>
            <person name="Rice P."/>
            <person name="Noelling J."/>
            <person name="Reeve J.N."/>
        </authorList>
    </citation>
    <scope>NUCLEOTIDE SEQUENCE [LARGE SCALE GENOMIC DNA]</scope>
    <source>
        <strain>ATCC 29096 / DSM 1053 / JCM 10044 / NBRC 100330 / Delta H</strain>
    </source>
</reference>